<comment type="function">
    <text evidence="1">Required for the formation of a threonylcarbamoyl group on adenosine at position 37 (t(6)A37) in tRNAs that read codons beginning with adenine. Is a component of the KEOPS complex that is probably involved in the transfer of the threonylcarbamoyl moiety of threonylcarbamoyl-AMP (TC-AMP) to the N6 group of A37. The Kae1 domain likely plays a direct catalytic role in this reaction. The Bud32 domain probably displays kinase activity that regulates Kae1 function.</text>
</comment>
<comment type="catalytic activity">
    <reaction evidence="1">
        <text>L-seryl-[protein] + ATP = O-phospho-L-seryl-[protein] + ADP + H(+)</text>
        <dbReference type="Rhea" id="RHEA:17989"/>
        <dbReference type="Rhea" id="RHEA-COMP:9863"/>
        <dbReference type="Rhea" id="RHEA-COMP:11604"/>
        <dbReference type="ChEBI" id="CHEBI:15378"/>
        <dbReference type="ChEBI" id="CHEBI:29999"/>
        <dbReference type="ChEBI" id="CHEBI:30616"/>
        <dbReference type="ChEBI" id="CHEBI:83421"/>
        <dbReference type="ChEBI" id="CHEBI:456216"/>
        <dbReference type="EC" id="2.7.11.1"/>
    </reaction>
</comment>
<comment type="catalytic activity">
    <reaction evidence="1">
        <text>L-threonyl-[protein] + ATP = O-phospho-L-threonyl-[protein] + ADP + H(+)</text>
        <dbReference type="Rhea" id="RHEA:46608"/>
        <dbReference type="Rhea" id="RHEA-COMP:11060"/>
        <dbReference type="Rhea" id="RHEA-COMP:11605"/>
        <dbReference type="ChEBI" id="CHEBI:15378"/>
        <dbReference type="ChEBI" id="CHEBI:30013"/>
        <dbReference type="ChEBI" id="CHEBI:30616"/>
        <dbReference type="ChEBI" id="CHEBI:61977"/>
        <dbReference type="ChEBI" id="CHEBI:456216"/>
        <dbReference type="EC" id="2.7.11.1"/>
    </reaction>
</comment>
<comment type="catalytic activity">
    <reaction evidence="1">
        <text>L-threonylcarbamoyladenylate + adenosine(37) in tRNA = N(6)-L-threonylcarbamoyladenosine(37) in tRNA + AMP + H(+)</text>
        <dbReference type="Rhea" id="RHEA:37059"/>
        <dbReference type="Rhea" id="RHEA-COMP:10162"/>
        <dbReference type="Rhea" id="RHEA-COMP:10163"/>
        <dbReference type="ChEBI" id="CHEBI:15378"/>
        <dbReference type="ChEBI" id="CHEBI:73682"/>
        <dbReference type="ChEBI" id="CHEBI:74411"/>
        <dbReference type="ChEBI" id="CHEBI:74418"/>
        <dbReference type="ChEBI" id="CHEBI:456215"/>
        <dbReference type="EC" id="2.3.1.234"/>
    </reaction>
</comment>
<comment type="cofactor">
    <cofactor evidence="1">
        <name>Fe(2+)</name>
        <dbReference type="ChEBI" id="CHEBI:29033"/>
    </cofactor>
    <text evidence="1">Binds 1 Fe(2+) ion per subunit.</text>
</comment>
<comment type="subunit">
    <text evidence="1">Component of the KEOPS complex that consists of Kae1, Bud32, Cgi121 and Pcc1; the whole complex dimerizes.</text>
</comment>
<comment type="subcellular location">
    <subcellularLocation>
        <location evidence="1">Cytoplasm</location>
    </subcellularLocation>
</comment>
<comment type="similarity">
    <text evidence="1">In the N-terminal section; belongs to the KAE1 / TsaD family.</text>
</comment>
<comment type="similarity">
    <text evidence="1">In the C-terminal section; belongs to the protein kinase superfamily. Tyr protein kinase family. BUD32 subfamily.</text>
</comment>
<evidence type="ECO:0000255" key="1">
    <source>
        <dbReference type="HAMAP-Rule" id="MF_01447"/>
    </source>
</evidence>
<evidence type="ECO:0007829" key="2">
    <source>
        <dbReference type="PDB" id="3ENO"/>
    </source>
</evidence>
<keyword id="KW-0002">3D-structure</keyword>
<keyword id="KW-0012">Acyltransferase</keyword>
<keyword id="KW-0067">ATP-binding</keyword>
<keyword id="KW-0963">Cytoplasm</keyword>
<keyword id="KW-0408">Iron</keyword>
<keyword id="KW-0418">Kinase</keyword>
<keyword id="KW-0479">Metal-binding</keyword>
<keyword id="KW-0511">Multifunctional enzyme</keyword>
<keyword id="KW-0547">Nucleotide-binding</keyword>
<keyword id="KW-1185">Reference proteome</keyword>
<keyword id="KW-0723">Serine/threonine-protein kinase</keyword>
<keyword id="KW-0808">Transferase</keyword>
<keyword id="KW-0819">tRNA processing</keyword>
<gene>
    <name type="ordered locus">Ta0324</name>
</gene>
<sequence length="529" mass="58202">MIVLGLEGTAHTISCGIIDESRILAMESSMYRPKTGGIRPLDAAVHHSEVIDTVISRALEKAKISIHDIDLIGFSMGPGLAPSLRVTATAARTISVLTGKPIIGVNHPLGHIEIGRRVTGAIDPVMLYVSGGNTQVIAHVNGRYRVLGETLDIGIGNMIDKFAREAGIPFPGGPEIEKLAMKGTKLLDLPYSVKGMDTAFSGILTAALQYLKTGQAIEDISYSIQETAFAMLVEVLERALYVSGKDEILMAGGVALNRRLRDMVTNMAREAGIRSYLTDREYCMDNGIMIAQAALLMYKSGVRMSVEETAVNPRFRIDEVDAPWITDASRKDYGKAGAESRIEEVSFHGRPAIRKVRISKSYRNSDLDKKIRYERMRNEFTILRKLKEAGVNSPVVYDFDPFSMSITMQKIPGRMMSAELNEGRTDFLNELGIMIAKMHRAGIAHGDLTVNNIIVNDSVFIIDPSMGKVNAEIEDMAVDIYALEDSIKGLGLDSGSVIGQMLKSYRNNFNLADDVLETVSAIRRRHRYV</sequence>
<feature type="chain" id="PRO_0000303661" description="Probable bifunctional tRNA threonylcarbamoyladenosine biosynthesis protein">
    <location>
        <begin position="1"/>
        <end position="529"/>
    </location>
</feature>
<feature type="domain" description="Protein kinase" evidence="1">
    <location>
        <begin position="329"/>
        <end position="529"/>
    </location>
</feature>
<feature type="region of interest" description="Kae1">
    <location>
        <begin position="1"/>
        <end position="324"/>
    </location>
</feature>
<feature type="active site" description="Proton acceptor; for kinase activity" evidence="1">
    <location>
        <position position="447"/>
    </location>
</feature>
<feature type="binding site" evidence="1">
    <location>
        <position position="107"/>
    </location>
    <ligand>
        <name>Fe cation</name>
        <dbReference type="ChEBI" id="CHEBI:24875"/>
    </ligand>
</feature>
<feature type="binding site" evidence="1">
    <location>
        <position position="111"/>
    </location>
    <ligand>
        <name>Fe cation</name>
        <dbReference type="ChEBI" id="CHEBI:24875"/>
    </ligand>
</feature>
<feature type="binding site" evidence="1">
    <location>
        <begin position="128"/>
        <end position="132"/>
    </location>
    <ligand>
        <name>L-threonylcarbamoyladenylate</name>
        <dbReference type="ChEBI" id="CHEBI:73682"/>
    </ligand>
</feature>
<feature type="binding site" evidence="1">
    <location>
        <position position="128"/>
    </location>
    <ligand>
        <name>Fe cation</name>
        <dbReference type="ChEBI" id="CHEBI:24875"/>
    </ligand>
</feature>
<feature type="binding site" evidence="1">
    <location>
        <position position="160"/>
    </location>
    <ligand>
        <name>L-threonylcarbamoyladenylate</name>
        <dbReference type="ChEBI" id="CHEBI:73682"/>
    </ligand>
</feature>
<feature type="binding site" evidence="1">
    <location>
        <position position="173"/>
    </location>
    <ligand>
        <name>L-threonylcarbamoyladenylate</name>
        <dbReference type="ChEBI" id="CHEBI:73682"/>
    </ligand>
</feature>
<feature type="binding site" evidence="1">
    <location>
        <position position="177"/>
    </location>
    <ligand>
        <name>L-threonylcarbamoyladenylate</name>
        <dbReference type="ChEBI" id="CHEBI:73682"/>
    </ligand>
</feature>
<feature type="binding site" evidence="1">
    <location>
        <position position="257"/>
    </location>
    <ligand>
        <name>L-threonylcarbamoyladenylate</name>
        <dbReference type="ChEBI" id="CHEBI:73682"/>
    </ligand>
</feature>
<feature type="binding site" evidence="1">
    <location>
        <position position="285"/>
    </location>
    <ligand>
        <name>Fe cation</name>
        <dbReference type="ChEBI" id="CHEBI:24875"/>
    </ligand>
</feature>
<feature type="binding site" evidence="1">
    <location>
        <begin position="335"/>
        <end position="342"/>
    </location>
    <ligand>
        <name>ATP</name>
        <dbReference type="ChEBI" id="CHEBI:30616"/>
    </ligand>
</feature>
<feature type="binding site" evidence="1">
    <location>
        <position position="355"/>
    </location>
    <ligand>
        <name>ATP</name>
        <dbReference type="ChEBI" id="CHEBI:30616"/>
    </ligand>
</feature>
<feature type="strand" evidence="2">
    <location>
        <begin position="2"/>
        <end position="7"/>
    </location>
</feature>
<feature type="strand" evidence="2">
    <location>
        <begin position="9"/>
        <end position="21"/>
    </location>
</feature>
<feature type="strand" evidence="2">
    <location>
        <begin position="25"/>
        <end position="30"/>
    </location>
</feature>
<feature type="helix" evidence="2">
    <location>
        <begin position="40"/>
        <end position="62"/>
    </location>
</feature>
<feature type="helix" evidence="2">
    <location>
        <begin position="66"/>
        <end position="68"/>
    </location>
</feature>
<feature type="strand" evidence="2">
    <location>
        <begin position="71"/>
        <end position="75"/>
    </location>
</feature>
<feature type="strand" evidence="2">
    <location>
        <begin position="77"/>
        <end position="79"/>
    </location>
</feature>
<feature type="helix" evidence="2">
    <location>
        <begin position="81"/>
        <end position="98"/>
    </location>
</feature>
<feature type="strand" evidence="2">
    <location>
        <begin position="103"/>
        <end position="105"/>
    </location>
</feature>
<feature type="helix" evidence="2">
    <location>
        <begin position="107"/>
        <end position="119"/>
    </location>
</feature>
<feature type="strand" evidence="2">
    <location>
        <begin position="125"/>
        <end position="132"/>
    </location>
</feature>
<feature type="strand" evidence="2">
    <location>
        <begin position="134"/>
        <end position="139"/>
    </location>
</feature>
<feature type="strand" evidence="2">
    <location>
        <begin position="141"/>
        <end position="152"/>
    </location>
</feature>
<feature type="helix" evidence="2">
    <location>
        <begin position="155"/>
        <end position="163"/>
    </location>
</feature>
<feature type="turn" evidence="2">
    <location>
        <begin position="164"/>
        <end position="167"/>
    </location>
</feature>
<feature type="helix" evidence="2">
    <location>
        <begin position="172"/>
        <end position="177"/>
    </location>
</feature>
<feature type="helix" evidence="2">
    <location>
        <begin position="178"/>
        <end position="182"/>
    </location>
</feature>
<feature type="helix" evidence="2">
    <location>
        <begin position="201"/>
        <end position="212"/>
    </location>
</feature>
<feature type="helix" evidence="2">
    <location>
        <begin position="217"/>
        <end position="243"/>
    </location>
</feature>
<feature type="strand" evidence="2">
    <location>
        <begin position="246"/>
        <end position="253"/>
    </location>
</feature>
<feature type="helix" evidence="2">
    <location>
        <begin position="254"/>
        <end position="256"/>
    </location>
</feature>
<feature type="helix" evidence="2">
    <location>
        <begin position="258"/>
        <end position="271"/>
    </location>
</feature>
<feature type="strand" evidence="2">
    <location>
        <begin position="273"/>
        <end position="275"/>
    </location>
</feature>
<feature type="turn" evidence="2">
    <location>
        <begin position="280"/>
        <end position="283"/>
    </location>
</feature>
<feature type="helix" evidence="2">
    <location>
        <begin position="288"/>
        <end position="299"/>
    </location>
</feature>
<feature type="helix" evidence="2">
    <location>
        <begin position="306"/>
        <end position="308"/>
    </location>
</feature>
<feature type="helix" evidence="2">
    <location>
        <begin position="317"/>
        <end position="319"/>
    </location>
</feature>
<organism>
    <name type="scientific">Thermoplasma acidophilum (strain ATCC 25905 / DSM 1728 / JCM 9062 / NBRC 15155 / AMRC-C165)</name>
    <dbReference type="NCBI Taxonomy" id="273075"/>
    <lineage>
        <taxon>Archaea</taxon>
        <taxon>Methanobacteriati</taxon>
        <taxon>Thermoplasmatota</taxon>
        <taxon>Thermoplasmata</taxon>
        <taxon>Thermoplasmatales</taxon>
        <taxon>Thermoplasmataceae</taxon>
        <taxon>Thermoplasma</taxon>
    </lineage>
</organism>
<name>KAE1B_THEAC</name>
<reference key="1">
    <citation type="journal article" date="2000" name="Nature">
        <title>The genome sequence of the thermoacidophilic scavenger Thermoplasma acidophilum.</title>
        <authorList>
            <person name="Ruepp A."/>
            <person name="Graml W."/>
            <person name="Santos-Martinez M.-L."/>
            <person name="Koretke K.K."/>
            <person name="Volker C."/>
            <person name="Mewes H.-W."/>
            <person name="Frishman D."/>
            <person name="Stocker S."/>
            <person name="Lupas A.N."/>
            <person name="Baumeister W."/>
        </authorList>
    </citation>
    <scope>NUCLEOTIDE SEQUENCE [LARGE SCALE GENOMIC DNA]</scope>
    <source>
        <strain>ATCC 25905 / DSM 1728 / JCM 9062 / NBRC 15155 / AMRC-C165</strain>
    </source>
</reference>
<reference key="2">
    <citation type="journal article" date="2008" name="Mol. Cell">
        <title>Atomic structure of the KEOPS complex: an ancient protein kinase-containing molecular machine.</title>
        <authorList>
            <person name="Mao D.Y."/>
            <person name="Neculai D."/>
            <person name="Downey M."/>
            <person name="Orlicky S."/>
            <person name="Haffani Y.Z."/>
            <person name="Ceccarelli D.F."/>
            <person name="Ho J.S."/>
            <person name="Szilard R.K."/>
            <person name="Zhang W."/>
            <person name="Ho C.S."/>
            <person name="Wan L."/>
            <person name="Fares C."/>
            <person name="Rumpel S."/>
            <person name="Kurinov I."/>
            <person name="Arrowsmith C.H."/>
            <person name="Durocher D."/>
            <person name="Sicheri F."/>
        </authorList>
    </citation>
    <scope>X-RAY CRYSTALLOGRAPHY (3.02 ANGSTROMS) OF 1-329</scope>
</reference>
<proteinExistence type="evidence at protein level"/>
<accession>Q9HLA5</accession>
<protein>
    <recommendedName>
        <fullName evidence="1">Probable bifunctional tRNA threonylcarbamoyladenosine biosynthesis protein</fullName>
    </recommendedName>
    <domain>
        <recommendedName>
            <fullName evidence="1">tRNA N6-adenosine threonylcarbamoyltransferase</fullName>
            <ecNumber evidence="1">2.3.1.234</ecNumber>
        </recommendedName>
        <alternativeName>
            <fullName>N6-L-threonylcarbamoyladenine synthase</fullName>
            <shortName>t(6)A synthase</shortName>
        </alternativeName>
        <alternativeName>
            <fullName evidence="1">t(6)A37 threonylcarbamoyladenosine biosynthesis protein Kae1</fullName>
        </alternativeName>
        <alternativeName>
            <fullName evidence="1">tRNA threonylcarbamoyladenosine biosynthesis protein Kae1</fullName>
        </alternativeName>
    </domain>
    <domain>
        <recommendedName>
            <fullName evidence="1">Serine/threonine-protein kinase Bud32</fullName>
            <ecNumber evidence="1">2.7.11.1</ecNumber>
        </recommendedName>
    </domain>
</protein>
<dbReference type="EC" id="2.3.1.234" evidence="1"/>
<dbReference type="EC" id="2.7.11.1" evidence="1"/>
<dbReference type="EMBL" id="AL445064">
    <property type="protein sequence ID" value="CAC11469.1"/>
    <property type="molecule type" value="Genomic_DNA"/>
</dbReference>
<dbReference type="RefSeq" id="WP_010900753.1">
    <property type="nucleotide sequence ID" value="NC_002578.1"/>
</dbReference>
<dbReference type="PDB" id="3ENO">
    <property type="method" value="X-ray"/>
    <property type="resolution" value="3.02 A"/>
    <property type="chains" value="A/B=1-329"/>
</dbReference>
<dbReference type="PDBsum" id="3ENO"/>
<dbReference type="SMR" id="Q9HLA5"/>
<dbReference type="FunCoup" id="Q9HLA5">
    <property type="interactions" value="133"/>
</dbReference>
<dbReference type="STRING" id="273075.gene:9571542"/>
<dbReference type="PaxDb" id="273075-Ta0324"/>
<dbReference type="EnsemblBacteria" id="CAC11469">
    <property type="protein sequence ID" value="CAC11469"/>
    <property type="gene ID" value="CAC11469"/>
</dbReference>
<dbReference type="KEGG" id="tac:Ta0324"/>
<dbReference type="eggNOG" id="arCOG01183">
    <property type="taxonomic scope" value="Archaea"/>
</dbReference>
<dbReference type="eggNOG" id="arCOG01185">
    <property type="taxonomic scope" value="Archaea"/>
</dbReference>
<dbReference type="HOGENOM" id="CLU_023208_2_2_2"/>
<dbReference type="InParanoid" id="Q9HLA5"/>
<dbReference type="OrthoDB" id="6818at2157"/>
<dbReference type="EvolutionaryTrace" id="Q9HLA5"/>
<dbReference type="Proteomes" id="UP000001024">
    <property type="component" value="Chromosome"/>
</dbReference>
<dbReference type="GO" id="GO:0005737">
    <property type="term" value="C:cytoplasm"/>
    <property type="evidence" value="ECO:0007669"/>
    <property type="project" value="UniProtKB-SubCell"/>
</dbReference>
<dbReference type="GO" id="GO:0000408">
    <property type="term" value="C:EKC/KEOPS complex"/>
    <property type="evidence" value="ECO:0007669"/>
    <property type="project" value="InterPro"/>
</dbReference>
<dbReference type="GO" id="GO:0005524">
    <property type="term" value="F:ATP binding"/>
    <property type="evidence" value="ECO:0007669"/>
    <property type="project" value="UniProtKB-UniRule"/>
</dbReference>
<dbReference type="GO" id="GO:0005506">
    <property type="term" value="F:iron ion binding"/>
    <property type="evidence" value="ECO:0007669"/>
    <property type="project" value="UniProtKB-UniRule"/>
</dbReference>
<dbReference type="GO" id="GO:0004222">
    <property type="term" value="F:metalloendopeptidase activity"/>
    <property type="evidence" value="ECO:0007669"/>
    <property type="project" value="InterPro"/>
</dbReference>
<dbReference type="GO" id="GO:0061711">
    <property type="term" value="F:N(6)-L-threonylcarbamoyladenine synthase activity"/>
    <property type="evidence" value="ECO:0007669"/>
    <property type="project" value="UniProtKB-EC"/>
</dbReference>
<dbReference type="GO" id="GO:0106310">
    <property type="term" value="F:protein serine kinase activity"/>
    <property type="evidence" value="ECO:0007669"/>
    <property type="project" value="RHEA"/>
</dbReference>
<dbReference type="GO" id="GO:0004674">
    <property type="term" value="F:protein serine/threonine kinase activity"/>
    <property type="evidence" value="ECO:0007669"/>
    <property type="project" value="UniProtKB-KW"/>
</dbReference>
<dbReference type="GO" id="GO:0004712">
    <property type="term" value="F:protein serine/threonine/tyrosine kinase activity"/>
    <property type="evidence" value="ECO:0007669"/>
    <property type="project" value="UniProtKB-UniRule"/>
</dbReference>
<dbReference type="GO" id="GO:0008270">
    <property type="term" value="F:zinc ion binding"/>
    <property type="evidence" value="ECO:0007669"/>
    <property type="project" value="InterPro"/>
</dbReference>
<dbReference type="GO" id="GO:0002949">
    <property type="term" value="P:tRNA threonylcarbamoyladenosine modification"/>
    <property type="evidence" value="ECO:0007669"/>
    <property type="project" value="UniProtKB-UniRule"/>
</dbReference>
<dbReference type="CDD" id="cd24131">
    <property type="entry name" value="ASKHA_NBD_Kae1_arch_bac"/>
    <property type="match status" value="1"/>
</dbReference>
<dbReference type="FunFam" id="3.30.420.40:FF:000038">
    <property type="entry name" value="Probable tRNA N6-adenosine threonylcarbamoyltransferase"/>
    <property type="match status" value="1"/>
</dbReference>
<dbReference type="Gene3D" id="3.30.420.40">
    <property type="match status" value="2"/>
</dbReference>
<dbReference type="Gene3D" id="3.30.200.20">
    <property type="entry name" value="Phosphorylase Kinase, domain 1"/>
    <property type="match status" value="1"/>
</dbReference>
<dbReference type="Gene3D" id="1.10.510.10">
    <property type="entry name" value="Transferase(Phosphotransferase) domain 1"/>
    <property type="match status" value="1"/>
</dbReference>
<dbReference type="HAMAP" id="MF_01446">
    <property type="entry name" value="Kae1"/>
    <property type="match status" value="1"/>
</dbReference>
<dbReference type="HAMAP" id="MF_01447">
    <property type="entry name" value="Kae1_Bud32_arch"/>
    <property type="match status" value="1"/>
</dbReference>
<dbReference type="InterPro" id="IPR043129">
    <property type="entry name" value="ATPase_NBD"/>
</dbReference>
<dbReference type="InterPro" id="IPR022495">
    <property type="entry name" value="Bud32"/>
</dbReference>
<dbReference type="InterPro" id="IPR000905">
    <property type="entry name" value="Gcp-like_dom"/>
</dbReference>
<dbReference type="InterPro" id="IPR017861">
    <property type="entry name" value="KAE1/TsaD"/>
</dbReference>
<dbReference type="InterPro" id="IPR034680">
    <property type="entry name" value="Kae1_archaea_euk"/>
</dbReference>
<dbReference type="InterPro" id="IPR011009">
    <property type="entry name" value="Kinase-like_dom_sf"/>
</dbReference>
<dbReference type="InterPro" id="IPR018934">
    <property type="entry name" value="RIO_dom"/>
</dbReference>
<dbReference type="InterPro" id="IPR009220">
    <property type="entry name" value="tRNA_threonyl_synthase/kinase"/>
</dbReference>
<dbReference type="NCBIfam" id="TIGR03724">
    <property type="entry name" value="arch_bud32"/>
    <property type="match status" value="1"/>
</dbReference>
<dbReference type="NCBIfam" id="TIGR03722">
    <property type="entry name" value="arch_KAE1"/>
    <property type="match status" value="1"/>
</dbReference>
<dbReference type="NCBIfam" id="TIGR00329">
    <property type="entry name" value="gcp_kae1"/>
    <property type="match status" value="1"/>
</dbReference>
<dbReference type="NCBIfam" id="NF007174">
    <property type="entry name" value="PRK09605.1"/>
    <property type="match status" value="1"/>
</dbReference>
<dbReference type="PANTHER" id="PTHR11735">
    <property type="entry name" value="TRNA N6-ADENOSINE THREONYLCARBAMOYLTRANSFERASE"/>
    <property type="match status" value="1"/>
</dbReference>
<dbReference type="PANTHER" id="PTHR11735:SF14">
    <property type="entry name" value="TRNA N6-ADENOSINE THREONYLCARBAMOYLTRANSFERASE"/>
    <property type="match status" value="1"/>
</dbReference>
<dbReference type="Pfam" id="PF01163">
    <property type="entry name" value="RIO1"/>
    <property type="match status" value="1"/>
</dbReference>
<dbReference type="Pfam" id="PF00814">
    <property type="entry name" value="TsaD"/>
    <property type="match status" value="1"/>
</dbReference>
<dbReference type="PIRSF" id="PIRSF036401">
    <property type="entry name" value="Gcp_STYKS"/>
    <property type="match status" value="1"/>
</dbReference>
<dbReference type="PRINTS" id="PR00789">
    <property type="entry name" value="OSIALOPTASE"/>
</dbReference>
<dbReference type="SUPFAM" id="SSF53067">
    <property type="entry name" value="Actin-like ATPase domain"/>
    <property type="match status" value="1"/>
</dbReference>
<dbReference type="SUPFAM" id="SSF56112">
    <property type="entry name" value="Protein kinase-like (PK-like)"/>
    <property type="match status" value="1"/>
</dbReference>